<gene>
    <name evidence="1" type="primary">trpA</name>
    <name type="ordered locus">RB5560</name>
</gene>
<comment type="function">
    <text evidence="1">The alpha subunit is responsible for the aldol cleavage of indoleglycerol phosphate to indole and glyceraldehyde 3-phosphate.</text>
</comment>
<comment type="catalytic activity">
    <reaction evidence="1">
        <text>(1S,2R)-1-C-(indol-3-yl)glycerol 3-phosphate + L-serine = D-glyceraldehyde 3-phosphate + L-tryptophan + H2O</text>
        <dbReference type="Rhea" id="RHEA:10532"/>
        <dbReference type="ChEBI" id="CHEBI:15377"/>
        <dbReference type="ChEBI" id="CHEBI:33384"/>
        <dbReference type="ChEBI" id="CHEBI:57912"/>
        <dbReference type="ChEBI" id="CHEBI:58866"/>
        <dbReference type="ChEBI" id="CHEBI:59776"/>
        <dbReference type="EC" id="4.2.1.20"/>
    </reaction>
</comment>
<comment type="pathway">
    <text evidence="1">Amino-acid biosynthesis; L-tryptophan biosynthesis; L-tryptophan from chorismate: step 5/5.</text>
</comment>
<comment type="subunit">
    <text evidence="1">Tetramer of two alpha and two beta chains.</text>
</comment>
<comment type="similarity">
    <text evidence="1">Belongs to the TrpA family.</text>
</comment>
<comment type="sequence caution" evidence="2">
    <conflict type="erroneous initiation">
        <sequence resource="EMBL-CDS" id="CAD74308"/>
    </conflict>
</comment>
<keyword id="KW-0028">Amino-acid biosynthesis</keyword>
<keyword id="KW-0057">Aromatic amino acid biosynthesis</keyword>
<keyword id="KW-0456">Lyase</keyword>
<keyword id="KW-1185">Reference proteome</keyword>
<keyword id="KW-0822">Tryptophan biosynthesis</keyword>
<name>TRPA_RHOBA</name>
<feature type="chain" id="PRO_0000098833" description="Tryptophan synthase alpha chain">
    <location>
        <begin position="1"/>
        <end position="278"/>
    </location>
</feature>
<feature type="active site" description="Proton acceptor" evidence="1">
    <location>
        <position position="49"/>
    </location>
</feature>
<feature type="active site" description="Proton acceptor" evidence="1">
    <location>
        <position position="60"/>
    </location>
</feature>
<protein>
    <recommendedName>
        <fullName evidence="1">Tryptophan synthase alpha chain</fullName>
        <ecNumber evidence="1">4.2.1.20</ecNumber>
    </recommendedName>
</protein>
<dbReference type="EC" id="4.2.1.20" evidence="1"/>
<dbReference type="EMBL" id="BX294142">
    <property type="protein sequence ID" value="CAD74308.1"/>
    <property type="status" value="ALT_INIT"/>
    <property type="molecule type" value="Genomic_DNA"/>
</dbReference>
<dbReference type="RefSeq" id="NP_866768.1">
    <property type="nucleotide sequence ID" value="NC_005027.1"/>
</dbReference>
<dbReference type="RefSeq" id="WP_164921878.1">
    <property type="nucleotide sequence ID" value="NC_005027.1"/>
</dbReference>
<dbReference type="SMR" id="Q7URN0"/>
<dbReference type="FunCoup" id="Q7URN0">
    <property type="interactions" value="486"/>
</dbReference>
<dbReference type="STRING" id="243090.RB5560"/>
<dbReference type="EnsemblBacteria" id="CAD74308">
    <property type="protein sequence ID" value="CAD74308"/>
    <property type="gene ID" value="RB5560"/>
</dbReference>
<dbReference type="KEGG" id="rba:RB5560"/>
<dbReference type="PATRIC" id="fig|243090.15.peg.2668"/>
<dbReference type="eggNOG" id="COG0159">
    <property type="taxonomic scope" value="Bacteria"/>
</dbReference>
<dbReference type="HOGENOM" id="CLU_016734_0_0_0"/>
<dbReference type="InParanoid" id="Q7URN0"/>
<dbReference type="OrthoDB" id="9804578at2"/>
<dbReference type="UniPathway" id="UPA00035">
    <property type="reaction ID" value="UER00044"/>
</dbReference>
<dbReference type="Proteomes" id="UP000001025">
    <property type="component" value="Chromosome"/>
</dbReference>
<dbReference type="GO" id="GO:0005829">
    <property type="term" value="C:cytosol"/>
    <property type="evidence" value="ECO:0000318"/>
    <property type="project" value="GO_Central"/>
</dbReference>
<dbReference type="GO" id="GO:0004834">
    <property type="term" value="F:tryptophan synthase activity"/>
    <property type="evidence" value="ECO:0000318"/>
    <property type="project" value="GO_Central"/>
</dbReference>
<dbReference type="GO" id="GO:0000162">
    <property type="term" value="P:L-tryptophan biosynthetic process"/>
    <property type="evidence" value="ECO:0000318"/>
    <property type="project" value="GO_Central"/>
</dbReference>
<dbReference type="CDD" id="cd04724">
    <property type="entry name" value="Tryptophan_synthase_alpha"/>
    <property type="match status" value="1"/>
</dbReference>
<dbReference type="FunFam" id="3.20.20.70:FF:000037">
    <property type="entry name" value="Tryptophan synthase alpha chain"/>
    <property type="match status" value="1"/>
</dbReference>
<dbReference type="Gene3D" id="3.20.20.70">
    <property type="entry name" value="Aldolase class I"/>
    <property type="match status" value="1"/>
</dbReference>
<dbReference type="HAMAP" id="MF_00131">
    <property type="entry name" value="Trp_synth_alpha"/>
    <property type="match status" value="1"/>
</dbReference>
<dbReference type="InterPro" id="IPR013785">
    <property type="entry name" value="Aldolase_TIM"/>
</dbReference>
<dbReference type="InterPro" id="IPR011060">
    <property type="entry name" value="RibuloseP-bd_barrel"/>
</dbReference>
<dbReference type="InterPro" id="IPR002028">
    <property type="entry name" value="Trp_synthase_suA"/>
</dbReference>
<dbReference type="NCBIfam" id="TIGR00262">
    <property type="entry name" value="trpA"/>
    <property type="match status" value="1"/>
</dbReference>
<dbReference type="PANTHER" id="PTHR43406:SF1">
    <property type="entry name" value="TRYPTOPHAN SYNTHASE ALPHA CHAIN, CHLOROPLASTIC"/>
    <property type="match status" value="1"/>
</dbReference>
<dbReference type="PANTHER" id="PTHR43406">
    <property type="entry name" value="TRYPTOPHAN SYNTHASE, ALPHA CHAIN"/>
    <property type="match status" value="1"/>
</dbReference>
<dbReference type="Pfam" id="PF00290">
    <property type="entry name" value="Trp_syntA"/>
    <property type="match status" value="1"/>
</dbReference>
<dbReference type="SUPFAM" id="SSF51366">
    <property type="entry name" value="Ribulose-phoshate binding barrel"/>
    <property type="match status" value="1"/>
</dbReference>
<accession>Q7URN0</accession>
<evidence type="ECO:0000255" key="1">
    <source>
        <dbReference type="HAMAP-Rule" id="MF_00131"/>
    </source>
</evidence>
<evidence type="ECO:0000305" key="2"/>
<reference key="1">
    <citation type="journal article" date="2003" name="Proc. Natl. Acad. Sci. U.S.A.">
        <title>Complete genome sequence of the marine planctomycete Pirellula sp. strain 1.</title>
        <authorList>
            <person name="Gloeckner F.O."/>
            <person name="Kube M."/>
            <person name="Bauer M."/>
            <person name="Teeling H."/>
            <person name="Lombardot T."/>
            <person name="Ludwig W."/>
            <person name="Gade D."/>
            <person name="Beck A."/>
            <person name="Borzym K."/>
            <person name="Heitmann K."/>
            <person name="Rabus R."/>
            <person name="Schlesner H."/>
            <person name="Amann R."/>
            <person name="Reinhardt R."/>
        </authorList>
    </citation>
    <scope>NUCLEOTIDE SEQUENCE [LARGE SCALE GENOMIC DNA]</scope>
    <source>
        <strain>DSM 10527 / NCIMB 13988 / SH1</strain>
    </source>
</reference>
<organism>
    <name type="scientific">Rhodopirellula baltica (strain DSM 10527 / NCIMB 13988 / SH1)</name>
    <dbReference type="NCBI Taxonomy" id="243090"/>
    <lineage>
        <taxon>Bacteria</taxon>
        <taxon>Pseudomonadati</taxon>
        <taxon>Planctomycetota</taxon>
        <taxon>Planctomycetia</taxon>
        <taxon>Pirellulales</taxon>
        <taxon>Pirellulaceae</taxon>
        <taxon>Rhodopirellula</taxon>
    </lineage>
</organism>
<sequence>MTPLQSLFESLRGQNRKALMPFLTTGDPNIDTTEAVIAAARQAGADLCEVGVPYSDPIADGPVIQASYQRALDAGFKLQHVWDLGQRLTENPKVKAMPRVTMVSYSIIYRIGMAKYVDQAMQAGYCGAIVPDLLVEEAEDLSKICREKGFDLIQLVTPTTTRDRQCRIAELSSGFLYYVSVTGITGERTALPTNLVDNVGWLREQTELPICIGFGISGPETAAQLAPVSDGLIVGSAIVRRVADAVEKAKSSGADPVKTAAEEAGDFCHSLRQAIDAA</sequence>
<proteinExistence type="inferred from homology"/>